<organism>
    <name type="scientific">Exiguobacterium sp. (strain ATCC BAA-1283 / AT1b)</name>
    <dbReference type="NCBI Taxonomy" id="360911"/>
    <lineage>
        <taxon>Bacteria</taxon>
        <taxon>Bacillati</taxon>
        <taxon>Bacillota</taxon>
        <taxon>Bacilli</taxon>
        <taxon>Bacillales</taxon>
        <taxon>Bacillales Family XII. Incertae Sedis</taxon>
        <taxon>Exiguobacterium</taxon>
    </lineage>
</organism>
<name>XPT_EXISA</name>
<sequence>MKQLEDKIREEGRALSDQVLKVDAFLNHQVDPVLMQAIGKEFAERFKDAQIDRIVTLESSGIAPAMMTALEMDIPFVFARKRKSLTLQDDLVEADVYSFTKQETNRISLSRRFVLPGERVLVIDDFLANGEAALGLTQLVEAAGAEVSGVGIVIEKSFQLGRDKLIERGYRVESLARVAKLEKDHISFVEVVR</sequence>
<comment type="function">
    <text evidence="1">Converts the preformed base xanthine, a product of nucleic acid breakdown, to xanthosine 5'-monophosphate (XMP), so it can be reused for RNA or DNA synthesis.</text>
</comment>
<comment type="catalytic activity">
    <reaction evidence="1">
        <text>XMP + diphosphate = xanthine + 5-phospho-alpha-D-ribose 1-diphosphate</text>
        <dbReference type="Rhea" id="RHEA:10800"/>
        <dbReference type="ChEBI" id="CHEBI:17712"/>
        <dbReference type="ChEBI" id="CHEBI:33019"/>
        <dbReference type="ChEBI" id="CHEBI:57464"/>
        <dbReference type="ChEBI" id="CHEBI:58017"/>
        <dbReference type="EC" id="2.4.2.22"/>
    </reaction>
</comment>
<comment type="pathway">
    <text evidence="1">Purine metabolism; XMP biosynthesis via salvage pathway; XMP from xanthine: step 1/1.</text>
</comment>
<comment type="subunit">
    <text evidence="1">Homodimer.</text>
</comment>
<comment type="subcellular location">
    <subcellularLocation>
        <location evidence="1">Cytoplasm</location>
    </subcellularLocation>
</comment>
<comment type="similarity">
    <text evidence="1">Belongs to the purine/pyrimidine phosphoribosyltransferase family. Xpt subfamily.</text>
</comment>
<protein>
    <recommendedName>
        <fullName evidence="1">Xanthine phosphoribosyltransferase</fullName>
        <shortName evidence="1">XPRTase</shortName>
        <ecNumber evidence="1">2.4.2.22</ecNumber>
    </recommendedName>
</protein>
<dbReference type="EC" id="2.4.2.22" evidence="1"/>
<dbReference type="EMBL" id="CP001615">
    <property type="protein sequence ID" value="ACQ70900.1"/>
    <property type="molecule type" value="Genomic_DNA"/>
</dbReference>
<dbReference type="RefSeq" id="WP_015880459.1">
    <property type="nucleotide sequence ID" value="NC_012673.1"/>
</dbReference>
<dbReference type="SMR" id="C4L0T7"/>
<dbReference type="STRING" id="360911.EAT1b_1976"/>
<dbReference type="KEGG" id="eat:EAT1b_1976"/>
<dbReference type="eggNOG" id="COG0503">
    <property type="taxonomic scope" value="Bacteria"/>
</dbReference>
<dbReference type="HOGENOM" id="CLU_099015_0_0_9"/>
<dbReference type="OrthoDB" id="9790678at2"/>
<dbReference type="UniPathway" id="UPA00602">
    <property type="reaction ID" value="UER00658"/>
</dbReference>
<dbReference type="Proteomes" id="UP000000716">
    <property type="component" value="Chromosome"/>
</dbReference>
<dbReference type="GO" id="GO:0005737">
    <property type="term" value="C:cytoplasm"/>
    <property type="evidence" value="ECO:0007669"/>
    <property type="project" value="UniProtKB-SubCell"/>
</dbReference>
<dbReference type="GO" id="GO:0000310">
    <property type="term" value="F:xanthine phosphoribosyltransferase activity"/>
    <property type="evidence" value="ECO:0007669"/>
    <property type="project" value="UniProtKB-UniRule"/>
</dbReference>
<dbReference type="GO" id="GO:0006166">
    <property type="term" value="P:purine ribonucleoside salvage"/>
    <property type="evidence" value="ECO:0007669"/>
    <property type="project" value="UniProtKB-KW"/>
</dbReference>
<dbReference type="GO" id="GO:0046110">
    <property type="term" value="P:xanthine metabolic process"/>
    <property type="evidence" value="ECO:0007669"/>
    <property type="project" value="InterPro"/>
</dbReference>
<dbReference type="GO" id="GO:0032265">
    <property type="term" value="P:XMP salvage"/>
    <property type="evidence" value="ECO:0007669"/>
    <property type="project" value="UniProtKB-UniRule"/>
</dbReference>
<dbReference type="CDD" id="cd06223">
    <property type="entry name" value="PRTases_typeI"/>
    <property type="match status" value="1"/>
</dbReference>
<dbReference type="Gene3D" id="3.40.50.2020">
    <property type="match status" value="1"/>
</dbReference>
<dbReference type="HAMAP" id="MF_01184">
    <property type="entry name" value="XPRTase"/>
    <property type="match status" value="1"/>
</dbReference>
<dbReference type="InterPro" id="IPR000836">
    <property type="entry name" value="PRibTrfase_dom"/>
</dbReference>
<dbReference type="InterPro" id="IPR029057">
    <property type="entry name" value="PRTase-like"/>
</dbReference>
<dbReference type="InterPro" id="IPR050118">
    <property type="entry name" value="Pur/Pyrimidine_PRTase"/>
</dbReference>
<dbReference type="InterPro" id="IPR010079">
    <property type="entry name" value="Xanthine_PRibTrfase"/>
</dbReference>
<dbReference type="NCBIfam" id="NF006671">
    <property type="entry name" value="PRK09219.1"/>
    <property type="match status" value="1"/>
</dbReference>
<dbReference type="NCBIfam" id="TIGR01744">
    <property type="entry name" value="XPRTase"/>
    <property type="match status" value="1"/>
</dbReference>
<dbReference type="PANTHER" id="PTHR43864">
    <property type="entry name" value="HYPOXANTHINE/GUANINE PHOSPHORIBOSYLTRANSFERASE"/>
    <property type="match status" value="1"/>
</dbReference>
<dbReference type="PANTHER" id="PTHR43864:SF1">
    <property type="entry name" value="XANTHINE PHOSPHORIBOSYLTRANSFERASE"/>
    <property type="match status" value="1"/>
</dbReference>
<dbReference type="Pfam" id="PF00156">
    <property type="entry name" value="Pribosyltran"/>
    <property type="match status" value="1"/>
</dbReference>
<dbReference type="SUPFAM" id="SSF53271">
    <property type="entry name" value="PRTase-like"/>
    <property type="match status" value="1"/>
</dbReference>
<accession>C4L0T7</accession>
<gene>
    <name evidence="1" type="primary">xpt</name>
    <name type="ordered locus">EAT1b_1976</name>
</gene>
<evidence type="ECO:0000255" key="1">
    <source>
        <dbReference type="HAMAP-Rule" id="MF_01184"/>
    </source>
</evidence>
<reference key="1">
    <citation type="journal article" date="2011" name="J. Bacteriol.">
        <title>Complete genome sequence of the Thermophilic Bacterium Exiguobacterium sp. AT1b.</title>
        <authorList>
            <person name="Vishnivetskaya T.A."/>
            <person name="Lucas S."/>
            <person name="Copeland A."/>
            <person name="Lapidus A."/>
            <person name="Glavina del Rio T."/>
            <person name="Dalin E."/>
            <person name="Tice H."/>
            <person name="Bruce D.C."/>
            <person name="Goodwin L.A."/>
            <person name="Pitluck S."/>
            <person name="Saunders E."/>
            <person name="Brettin T."/>
            <person name="Detter C."/>
            <person name="Han C."/>
            <person name="Larimer F."/>
            <person name="Land M.L."/>
            <person name="Hauser L.J."/>
            <person name="Kyrpides N.C."/>
            <person name="Ovchinnikova G."/>
            <person name="Kathariou S."/>
            <person name="Ramaley R.F."/>
            <person name="Rodrigues D.F."/>
            <person name="Hendrix C."/>
            <person name="Richardson P."/>
            <person name="Tiedje J.M."/>
        </authorList>
    </citation>
    <scope>NUCLEOTIDE SEQUENCE [LARGE SCALE GENOMIC DNA]</scope>
    <source>
        <strain>ATCC BAA-1283 / AT1b</strain>
    </source>
</reference>
<feature type="chain" id="PRO_1000213767" description="Xanthine phosphoribosyltransferase">
    <location>
        <begin position="1"/>
        <end position="193"/>
    </location>
</feature>
<feature type="binding site" evidence="1">
    <location>
        <position position="20"/>
    </location>
    <ligand>
        <name>xanthine</name>
        <dbReference type="ChEBI" id="CHEBI:17712"/>
    </ligand>
</feature>
<feature type="binding site" evidence="1">
    <location>
        <position position="27"/>
    </location>
    <ligand>
        <name>xanthine</name>
        <dbReference type="ChEBI" id="CHEBI:17712"/>
    </ligand>
</feature>
<feature type="binding site" evidence="1">
    <location>
        <begin position="128"/>
        <end position="132"/>
    </location>
    <ligand>
        <name>5-phospho-alpha-D-ribose 1-diphosphate</name>
        <dbReference type="ChEBI" id="CHEBI:58017"/>
    </ligand>
</feature>
<feature type="binding site" evidence="1">
    <location>
        <position position="156"/>
    </location>
    <ligand>
        <name>xanthine</name>
        <dbReference type="ChEBI" id="CHEBI:17712"/>
    </ligand>
</feature>
<keyword id="KW-0963">Cytoplasm</keyword>
<keyword id="KW-0328">Glycosyltransferase</keyword>
<keyword id="KW-0660">Purine salvage</keyword>
<keyword id="KW-0808">Transferase</keyword>
<proteinExistence type="inferred from homology"/>